<comment type="function">
    <text evidence="1">Usually encoded in the trnK tRNA gene intron. Probably assists in splicing its own and other chloroplast group II introns.</text>
</comment>
<comment type="subcellular location">
    <subcellularLocation>
        <location>Plastid</location>
        <location>Chloroplast</location>
    </subcellularLocation>
</comment>
<comment type="similarity">
    <text evidence="1">Belongs to the intron maturase 2 family. MatK subfamily.</text>
</comment>
<name>MATK_TRIWO</name>
<dbReference type="EMBL" id="AF522138">
    <property type="protein sequence ID" value="AAM82130.1"/>
    <property type="molecule type" value="Genomic_DNA"/>
</dbReference>
<dbReference type="GO" id="GO:0009507">
    <property type="term" value="C:chloroplast"/>
    <property type="evidence" value="ECO:0007669"/>
    <property type="project" value="UniProtKB-SubCell"/>
</dbReference>
<dbReference type="GO" id="GO:0003723">
    <property type="term" value="F:RNA binding"/>
    <property type="evidence" value="ECO:0007669"/>
    <property type="project" value="UniProtKB-KW"/>
</dbReference>
<dbReference type="GO" id="GO:0006397">
    <property type="term" value="P:mRNA processing"/>
    <property type="evidence" value="ECO:0007669"/>
    <property type="project" value="UniProtKB-KW"/>
</dbReference>
<dbReference type="GO" id="GO:0008380">
    <property type="term" value="P:RNA splicing"/>
    <property type="evidence" value="ECO:0007669"/>
    <property type="project" value="UniProtKB-UniRule"/>
</dbReference>
<dbReference type="GO" id="GO:0008033">
    <property type="term" value="P:tRNA processing"/>
    <property type="evidence" value="ECO:0007669"/>
    <property type="project" value="UniProtKB-KW"/>
</dbReference>
<dbReference type="HAMAP" id="MF_01390">
    <property type="entry name" value="MatK"/>
    <property type="match status" value="1"/>
</dbReference>
<dbReference type="InterPro" id="IPR024937">
    <property type="entry name" value="Domain_X"/>
</dbReference>
<dbReference type="InterPro" id="IPR002866">
    <property type="entry name" value="Maturase_MatK"/>
</dbReference>
<dbReference type="InterPro" id="IPR024942">
    <property type="entry name" value="Maturase_MatK_N"/>
</dbReference>
<dbReference type="PANTHER" id="PTHR34811">
    <property type="entry name" value="MATURASE K"/>
    <property type="match status" value="1"/>
</dbReference>
<dbReference type="PANTHER" id="PTHR34811:SF1">
    <property type="entry name" value="MATURASE K"/>
    <property type="match status" value="1"/>
</dbReference>
<dbReference type="Pfam" id="PF01348">
    <property type="entry name" value="Intron_maturas2"/>
    <property type="match status" value="1"/>
</dbReference>
<dbReference type="Pfam" id="PF01824">
    <property type="entry name" value="MatK_N"/>
    <property type="match status" value="1"/>
</dbReference>
<feature type="chain" id="PRO_0000143759" description="Maturase K">
    <location>
        <begin position="1"/>
        <end position="506"/>
    </location>
</feature>
<gene>
    <name evidence="1" type="primary">matK</name>
</gene>
<accession>Q8MCL7</accession>
<sequence length="506" mass="61061">MKEYRVYLERARSRQQDFLYPLIFREYIYGLAYSHNFNRSIFVENGGYDNKYTLLNVKRLITRMYQQNHLIISANDSNKNPFLGYNKNFYSQIISEGFAIVVEIPFFLQLSSSLEEAEIIKSYKNVRSIHSVFPFLEDKFTYLNYVSDIRIPYPIHLEILVQILRYWVKDVPFFHLLRLFLYHFCNWNCFIPTKKSISTFSKSNPRLFLFLYNFYVCEYESIFLFLRNKSYHLRLKSFSVFFERNFFYAKREHLVEVFSKDFSYTLPFFKDPNIHYVRYQGKCILASKNVPFLMNKWKYYFIHLWQCFFDVWSQPRTININQLSEHSFQLLGYFSNVRLNRSVVRSQMLQNTFLIEIVSKKLDIIVPIIPLIRSLAKAKFCNVLGHPISKPVWADSSDFDIIERFLRICRNLSHYYNGSSKKKSLYRIKYILRLSCIKTLACKHKSTVRAFLKRSGSEELLEEFFTEEEEILSLIFPRDSFTLHRFHRNRIWYLDILFSNDLVNDE</sequence>
<evidence type="ECO:0000255" key="1">
    <source>
        <dbReference type="HAMAP-Rule" id="MF_01390"/>
    </source>
</evidence>
<proteinExistence type="inferred from homology"/>
<geneLocation type="chloroplast"/>
<reference key="1">
    <citation type="book" date="2003" name="Advances in legume systematics - part 10">
        <title>Phylogenetic analyses of tribes Trifolieae and Vicieae based on sequences of the plastid gene matK (Papilionoideae: Leguminosae).</title>
        <editorList>
            <person name="Klitgaard B.B."/>
            <person name="Bruneau A."/>
        </editorList>
        <authorList>
            <person name="Steele K.P."/>
            <person name="Wojciechowski M.F."/>
        </authorList>
    </citation>
    <scope>NUCLEOTIDE SEQUENCE [GENOMIC DNA]</scope>
</reference>
<keyword id="KW-0150">Chloroplast</keyword>
<keyword id="KW-0507">mRNA processing</keyword>
<keyword id="KW-0934">Plastid</keyword>
<keyword id="KW-0694">RNA-binding</keyword>
<keyword id="KW-0819">tRNA processing</keyword>
<protein>
    <recommendedName>
        <fullName evidence="1">Maturase K</fullName>
    </recommendedName>
    <alternativeName>
        <fullName evidence="1">Intron maturase</fullName>
    </alternativeName>
</protein>
<organism>
    <name type="scientific">Trifolium wormskioldii</name>
    <name type="common">Cows clover</name>
    <name type="synonym">Trifolium fimbriatum</name>
    <dbReference type="NCBI Taxonomy" id="200960"/>
    <lineage>
        <taxon>Eukaryota</taxon>
        <taxon>Viridiplantae</taxon>
        <taxon>Streptophyta</taxon>
        <taxon>Embryophyta</taxon>
        <taxon>Tracheophyta</taxon>
        <taxon>Spermatophyta</taxon>
        <taxon>Magnoliopsida</taxon>
        <taxon>eudicotyledons</taxon>
        <taxon>Gunneridae</taxon>
        <taxon>Pentapetalae</taxon>
        <taxon>rosids</taxon>
        <taxon>fabids</taxon>
        <taxon>Fabales</taxon>
        <taxon>Fabaceae</taxon>
        <taxon>Papilionoideae</taxon>
        <taxon>50 kb inversion clade</taxon>
        <taxon>NPAAA clade</taxon>
        <taxon>Hologalegina</taxon>
        <taxon>IRL clade</taxon>
        <taxon>Trifolieae</taxon>
        <taxon>Trifolium</taxon>
    </lineage>
</organism>